<reference key="1">
    <citation type="journal article" date="2000" name="Science">
        <title>Bacterial rhodopsin: evidence for a new type of phototrophy in the sea.</title>
        <authorList>
            <person name="Beja O."/>
            <person name="Aravind L."/>
            <person name="Koonin E.V."/>
            <person name="Suzuki M.T."/>
            <person name="Hadd A."/>
            <person name="Nguyen L.P."/>
            <person name="Jovanovich S.B."/>
            <person name="Gates C.M."/>
            <person name="Feldman R.A."/>
            <person name="Spudich J.L."/>
            <person name="Spudich E.N."/>
            <person name="DeLong E.F."/>
        </authorList>
    </citation>
    <scope>NUCLEOTIDE SEQUENCE [GENOMIC DNA]</scope>
</reference>
<accession>Q9F7R5</accession>
<sequence length="641" mass="71602">MPRKLYSPKHSSNPYIKDFDEYKELYKQSIEDPSKFFKNLANENISWMEDFKTTFNNQFNNAKWFEGGKTNISLNCIDRHLENDPNKIALIWEGDDPADSKELTYKELHDEVCKFANVLKDLGVQKGSRVCIYMPMIIETAFAMLACTRIGAVHSVVFGGFSPESLKDRILDADCKIVITADEGLRGGKKVPLKSNVDEALLGCPDVKNTLVIKRTGGEINWDDKKDVWYEDLVKDVSNKCAPEPMDSEDPLFILYTSGSTGKPKGVLHTTAGYLLGAHISFKYLFGIRPEDKYWCTADVGWITGHTYILYGPLSNGATTLMFEGVPTYPSASRCWEICDKHDISIFYTAPTAIRALMAQGDDPVKKTKRDSLRILGTVGEPINPEAWDWYYSVVGKSNCEVIDTWWQTETGSVLISPIAGITPTKPGSATLPFFGVKPSLYDEHGNTLEGSNAGNLVIEQSWPSQIRSIYGDHQRMIDTYFGMYKDIYFTGDGARRDEDGYFWITGRVDDVLNVSGHRLGTAEIESALVLHPKIAEAAVVGFDHPIKGQGIYAFVTLMINESFDDNFSYELKQFVAKEIGAIAKPDLIQNAPGLPKTRSGKIMRRILRKIAENDLSNLGDTTTLADPSVVESLIENKQSL</sequence>
<keyword id="KW-0007">Acetylation</keyword>
<keyword id="KW-0067">ATP-binding</keyword>
<keyword id="KW-0436">Ligase</keyword>
<keyword id="KW-0460">Magnesium</keyword>
<keyword id="KW-0479">Metal-binding</keyword>
<keyword id="KW-0547">Nucleotide-binding</keyword>
<evidence type="ECO:0000255" key="1">
    <source>
        <dbReference type="HAMAP-Rule" id="MF_01123"/>
    </source>
</evidence>
<proteinExistence type="inferred from homology"/>
<feature type="chain" id="PRO_0000208373" description="Acetyl-coenzyme A synthetase">
    <location>
        <begin position="1"/>
        <end position="641"/>
    </location>
</feature>
<feature type="binding site" evidence="1">
    <location>
        <begin position="186"/>
        <end position="189"/>
    </location>
    <ligand>
        <name>CoA</name>
        <dbReference type="ChEBI" id="CHEBI:57287"/>
    </ligand>
</feature>
<feature type="binding site" evidence="1">
    <location>
        <position position="304"/>
    </location>
    <ligand>
        <name>CoA</name>
        <dbReference type="ChEBI" id="CHEBI:57287"/>
    </ligand>
</feature>
<feature type="binding site" evidence="1">
    <location>
        <begin position="380"/>
        <end position="382"/>
    </location>
    <ligand>
        <name>ATP</name>
        <dbReference type="ChEBI" id="CHEBI:30616"/>
    </ligand>
</feature>
<feature type="binding site" evidence="1">
    <location>
        <begin position="404"/>
        <end position="409"/>
    </location>
    <ligand>
        <name>ATP</name>
        <dbReference type="ChEBI" id="CHEBI:30616"/>
    </ligand>
</feature>
<feature type="binding site" evidence="1">
    <location>
        <position position="493"/>
    </location>
    <ligand>
        <name>ATP</name>
        <dbReference type="ChEBI" id="CHEBI:30616"/>
    </ligand>
</feature>
<feature type="binding site" evidence="1">
    <location>
        <position position="508"/>
    </location>
    <ligand>
        <name>ATP</name>
        <dbReference type="ChEBI" id="CHEBI:30616"/>
    </ligand>
</feature>
<feature type="binding site" evidence="1">
    <location>
        <position position="516"/>
    </location>
    <ligand>
        <name>CoA</name>
        <dbReference type="ChEBI" id="CHEBI:57287"/>
    </ligand>
</feature>
<feature type="binding site" evidence="1">
    <location>
        <position position="519"/>
    </location>
    <ligand>
        <name>ATP</name>
        <dbReference type="ChEBI" id="CHEBI:30616"/>
    </ligand>
</feature>
<feature type="binding site" evidence="1">
    <location>
        <position position="530"/>
    </location>
    <ligand>
        <name>Mg(2+)</name>
        <dbReference type="ChEBI" id="CHEBI:18420"/>
    </ligand>
</feature>
<feature type="binding site" evidence="1">
    <location>
        <position position="532"/>
    </location>
    <ligand>
        <name>Mg(2+)</name>
        <dbReference type="ChEBI" id="CHEBI:18420"/>
    </ligand>
</feature>
<feature type="binding site" evidence="1">
    <location>
        <position position="535"/>
    </location>
    <ligand>
        <name>Mg(2+)</name>
        <dbReference type="ChEBI" id="CHEBI:18420"/>
    </ligand>
</feature>
<feature type="modified residue" description="N6-acetyllysine" evidence="1">
    <location>
        <position position="602"/>
    </location>
</feature>
<name>ACSA_PRB01</name>
<gene>
    <name evidence="1" type="primary">acsA</name>
</gene>
<dbReference type="EC" id="6.2.1.1" evidence="1"/>
<dbReference type="EMBL" id="AF279106">
    <property type="protein sequence ID" value="AAG10454.1"/>
    <property type="molecule type" value="Genomic_DNA"/>
</dbReference>
<dbReference type="SMR" id="Q9F7R5"/>
<dbReference type="GO" id="GO:0005829">
    <property type="term" value="C:cytosol"/>
    <property type="evidence" value="ECO:0007669"/>
    <property type="project" value="TreeGrafter"/>
</dbReference>
<dbReference type="GO" id="GO:0003987">
    <property type="term" value="F:acetate-CoA ligase activity"/>
    <property type="evidence" value="ECO:0007669"/>
    <property type="project" value="UniProtKB-UniRule"/>
</dbReference>
<dbReference type="GO" id="GO:0016208">
    <property type="term" value="F:AMP binding"/>
    <property type="evidence" value="ECO:0007669"/>
    <property type="project" value="InterPro"/>
</dbReference>
<dbReference type="GO" id="GO:0005524">
    <property type="term" value="F:ATP binding"/>
    <property type="evidence" value="ECO:0007669"/>
    <property type="project" value="UniProtKB-KW"/>
</dbReference>
<dbReference type="GO" id="GO:0046872">
    <property type="term" value="F:metal ion binding"/>
    <property type="evidence" value="ECO:0007669"/>
    <property type="project" value="UniProtKB-KW"/>
</dbReference>
<dbReference type="GO" id="GO:0019427">
    <property type="term" value="P:acetyl-CoA biosynthetic process from acetate"/>
    <property type="evidence" value="ECO:0007669"/>
    <property type="project" value="InterPro"/>
</dbReference>
<dbReference type="CDD" id="cd05966">
    <property type="entry name" value="ACS"/>
    <property type="match status" value="1"/>
</dbReference>
<dbReference type="FunFam" id="3.30.300.30:FF:000004">
    <property type="entry name" value="Acetyl-coenzyme A synthetase"/>
    <property type="match status" value="1"/>
</dbReference>
<dbReference type="FunFam" id="3.40.50.12780:FF:000001">
    <property type="entry name" value="Acetyl-coenzyme A synthetase"/>
    <property type="match status" value="1"/>
</dbReference>
<dbReference type="Gene3D" id="3.30.300.30">
    <property type="match status" value="1"/>
</dbReference>
<dbReference type="Gene3D" id="3.40.50.12780">
    <property type="entry name" value="N-terminal domain of ligase-like"/>
    <property type="match status" value="1"/>
</dbReference>
<dbReference type="HAMAP" id="MF_01123">
    <property type="entry name" value="Ac_CoA_synth"/>
    <property type="match status" value="1"/>
</dbReference>
<dbReference type="InterPro" id="IPR011904">
    <property type="entry name" value="Ac_CoA_lig"/>
</dbReference>
<dbReference type="InterPro" id="IPR032387">
    <property type="entry name" value="ACAS_N"/>
</dbReference>
<dbReference type="InterPro" id="IPR025110">
    <property type="entry name" value="AMP-bd_C"/>
</dbReference>
<dbReference type="InterPro" id="IPR045851">
    <property type="entry name" value="AMP-bd_C_sf"/>
</dbReference>
<dbReference type="InterPro" id="IPR020845">
    <property type="entry name" value="AMP-binding_CS"/>
</dbReference>
<dbReference type="InterPro" id="IPR000873">
    <property type="entry name" value="AMP-dep_synth/lig_dom"/>
</dbReference>
<dbReference type="InterPro" id="IPR042099">
    <property type="entry name" value="ANL_N_sf"/>
</dbReference>
<dbReference type="NCBIfam" id="TIGR02188">
    <property type="entry name" value="Ac_CoA_lig_AcsA"/>
    <property type="match status" value="1"/>
</dbReference>
<dbReference type="NCBIfam" id="NF001208">
    <property type="entry name" value="PRK00174.1"/>
    <property type="match status" value="1"/>
</dbReference>
<dbReference type="PANTHER" id="PTHR24095">
    <property type="entry name" value="ACETYL-COENZYME A SYNTHETASE"/>
    <property type="match status" value="1"/>
</dbReference>
<dbReference type="PANTHER" id="PTHR24095:SF14">
    <property type="entry name" value="ACETYL-COENZYME A SYNTHETASE 1"/>
    <property type="match status" value="1"/>
</dbReference>
<dbReference type="Pfam" id="PF16177">
    <property type="entry name" value="ACAS_N"/>
    <property type="match status" value="1"/>
</dbReference>
<dbReference type="Pfam" id="PF00501">
    <property type="entry name" value="AMP-binding"/>
    <property type="match status" value="1"/>
</dbReference>
<dbReference type="Pfam" id="PF13193">
    <property type="entry name" value="AMP-binding_C"/>
    <property type="match status" value="1"/>
</dbReference>
<dbReference type="SUPFAM" id="SSF56801">
    <property type="entry name" value="Acetyl-CoA synthetase-like"/>
    <property type="match status" value="1"/>
</dbReference>
<dbReference type="PROSITE" id="PS00455">
    <property type="entry name" value="AMP_BINDING"/>
    <property type="match status" value="1"/>
</dbReference>
<organism>
    <name type="scientific">Gamma-proteobacterium EBAC31A08</name>
    <dbReference type="NCBI Taxonomy" id="133804"/>
    <lineage>
        <taxon>Bacteria</taxon>
        <taxon>Pseudomonadati</taxon>
        <taxon>Pseudomonadota</taxon>
        <taxon>Gammaproteobacteria</taxon>
        <taxon>environmental samples</taxon>
    </lineage>
</organism>
<comment type="function">
    <text evidence="1">Catalyzes the conversion of acetate into acetyl-CoA (AcCoA), an essential intermediate at the junction of anabolic and catabolic pathways. AcsA undergoes a two-step reaction. In the first half reaction, AcsA combines acetate with ATP to form acetyl-adenylate (AcAMP) intermediate. In the second half reaction, it can then transfer the acetyl group from AcAMP to the sulfhydryl group of CoA, forming the product AcCoA.</text>
</comment>
<comment type="catalytic activity">
    <reaction evidence="1">
        <text>acetate + ATP + CoA = acetyl-CoA + AMP + diphosphate</text>
        <dbReference type="Rhea" id="RHEA:23176"/>
        <dbReference type="ChEBI" id="CHEBI:30089"/>
        <dbReference type="ChEBI" id="CHEBI:30616"/>
        <dbReference type="ChEBI" id="CHEBI:33019"/>
        <dbReference type="ChEBI" id="CHEBI:57287"/>
        <dbReference type="ChEBI" id="CHEBI:57288"/>
        <dbReference type="ChEBI" id="CHEBI:456215"/>
        <dbReference type="EC" id="6.2.1.1"/>
    </reaction>
</comment>
<comment type="cofactor">
    <cofactor evidence="1">
        <name>Mg(2+)</name>
        <dbReference type="ChEBI" id="CHEBI:18420"/>
    </cofactor>
</comment>
<comment type="PTM">
    <text evidence="1">Acetylated. Deacetylation by the SIR2-homolog deacetylase activates the enzyme.</text>
</comment>
<comment type="similarity">
    <text evidence="1">Belongs to the ATP-dependent AMP-binding enzyme family.</text>
</comment>
<protein>
    <recommendedName>
        <fullName evidence="1">Acetyl-coenzyme A synthetase</fullName>
        <shortName evidence="1">AcCoA synthetase</shortName>
        <shortName evidence="1">Acs</shortName>
        <ecNumber evidence="1">6.2.1.1</ecNumber>
    </recommendedName>
    <alternativeName>
        <fullName evidence="1">Acetate--CoA ligase</fullName>
    </alternativeName>
    <alternativeName>
        <fullName evidence="1">Acyl-activating enzyme</fullName>
    </alternativeName>
</protein>